<sequence length="98" mass="11141">MALTKAELAEVLFDKYGVSKQDAKVLVEDFFEEIRVALERGEQVKLSGFGNFELRTKNQRPGRNPKTGEEIPISARRVVTFKPGQKFKSRVENAEPED</sequence>
<keyword id="KW-0233">DNA recombination</keyword>
<keyword id="KW-0238">DNA-binding</keyword>
<keyword id="KW-1185">Reference proteome</keyword>
<keyword id="KW-0804">Transcription</keyword>
<keyword id="KW-0805">Transcription regulation</keyword>
<keyword id="KW-0810">Translation regulation</keyword>
<comment type="function">
    <text evidence="1">This protein is one of the two subunits of integration host factor, a specific DNA-binding protein that functions in genetic recombination as well as in transcriptional and translational control.</text>
</comment>
<comment type="subunit">
    <text evidence="1">Heterodimer of an alpha and a beta chain.</text>
</comment>
<comment type="similarity">
    <text evidence="1">Belongs to the bacterial histone-like protein family.</text>
</comment>
<proteinExistence type="inferred from homology"/>
<dbReference type="EMBL" id="AE017340">
    <property type="protein sequence ID" value="AAV82233.1"/>
    <property type="molecule type" value="Genomic_DNA"/>
</dbReference>
<dbReference type="RefSeq" id="WP_011234639.1">
    <property type="nucleotide sequence ID" value="NC_006512.1"/>
</dbReference>
<dbReference type="SMR" id="Q5QXL9"/>
<dbReference type="STRING" id="283942.IL1393"/>
<dbReference type="GeneID" id="41336569"/>
<dbReference type="KEGG" id="ilo:IL1393"/>
<dbReference type="eggNOG" id="COG0776">
    <property type="taxonomic scope" value="Bacteria"/>
</dbReference>
<dbReference type="HOGENOM" id="CLU_105066_1_3_6"/>
<dbReference type="OrthoDB" id="9797747at2"/>
<dbReference type="Proteomes" id="UP000001171">
    <property type="component" value="Chromosome"/>
</dbReference>
<dbReference type="GO" id="GO:0005829">
    <property type="term" value="C:cytosol"/>
    <property type="evidence" value="ECO:0007669"/>
    <property type="project" value="TreeGrafter"/>
</dbReference>
<dbReference type="GO" id="GO:0003677">
    <property type="term" value="F:DNA binding"/>
    <property type="evidence" value="ECO:0007669"/>
    <property type="project" value="UniProtKB-UniRule"/>
</dbReference>
<dbReference type="GO" id="GO:0030527">
    <property type="term" value="F:structural constituent of chromatin"/>
    <property type="evidence" value="ECO:0007669"/>
    <property type="project" value="InterPro"/>
</dbReference>
<dbReference type="GO" id="GO:0006310">
    <property type="term" value="P:DNA recombination"/>
    <property type="evidence" value="ECO:0007669"/>
    <property type="project" value="UniProtKB-UniRule"/>
</dbReference>
<dbReference type="GO" id="GO:0009893">
    <property type="term" value="P:positive regulation of metabolic process"/>
    <property type="evidence" value="ECO:0007669"/>
    <property type="project" value="UniProtKB-ARBA"/>
</dbReference>
<dbReference type="GO" id="GO:0006355">
    <property type="term" value="P:regulation of DNA-templated transcription"/>
    <property type="evidence" value="ECO:0007669"/>
    <property type="project" value="UniProtKB-UniRule"/>
</dbReference>
<dbReference type="GO" id="GO:0006417">
    <property type="term" value="P:regulation of translation"/>
    <property type="evidence" value="ECO:0007669"/>
    <property type="project" value="UniProtKB-UniRule"/>
</dbReference>
<dbReference type="CDD" id="cd13835">
    <property type="entry name" value="IHF_A"/>
    <property type="match status" value="1"/>
</dbReference>
<dbReference type="FunFam" id="4.10.520.10:FF:000002">
    <property type="entry name" value="Integration host factor subunit alpha"/>
    <property type="match status" value="1"/>
</dbReference>
<dbReference type="Gene3D" id="4.10.520.10">
    <property type="entry name" value="IHF-like DNA-binding proteins"/>
    <property type="match status" value="1"/>
</dbReference>
<dbReference type="HAMAP" id="MF_00380">
    <property type="entry name" value="IHF_alpha"/>
    <property type="match status" value="1"/>
</dbReference>
<dbReference type="InterPro" id="IPR000119">
    <property type="entry name" value="Hist_DNA-bd"/>
</dbReference>
<dbReference type="InterPro" id="IPR020816">
    <property type="entry name" value="Histone-like_DNA-bd_CS"/>
</dbReference>
<dbReference type="InterPro" id="IPR010992">
    <property type="entry name" value="IHF-like_DNA-bd_dom_sf"/>
</dbReference>
<dbReference type="InterPro" id="IPR005684">
    <property type="entry name" value="IHF_alpha"/>
</dbReference>
<dbReference type="NCBIfam" id="TIGR00987">
    <property type="entry name" value="himA"/>
    <property type="match status" value="1"/>
</dbReference>
<dbReference type="NCBIfam" id="NF001401">
    <property type="entry name" value="PRK00285.1"/>
    <property type="match status" value="1"/>
</dbReference>
<dbReference type="PANTHER" id="PTHR33175">
    <property type="entry name" value="DNA-BINDING PROTEIN HU"/>
    <property type="match status" value="1"/>
</dbReference>
<dbReference type="PANTHER" id="PTHR33175:SF2">
    <property type="entry name" value="INTEGRATION HOST FACTOR SUBUNIT ALPHA"/>
    <property type="match status" value="1"/>
</dbReference>
<dbReference type="Pfam" id="PF00216">
    <property type="entry name" value="Bac_DNA_binding"/>
    <property type="match status" value="1"/>
</dbReference>
<dbReference type="PRINTS" id="PR01727">
    <property type="entry name" value="DNABINDINGHU"/>
</dbReference>
<dbReference type="SMART" id="SM00411">
    <property type="entry name" value="BHL"/>
    <property type="match status" value="1"/>
</dbReference>
<dbReference type="SUPFAM" id="SSF47729">
    <property type="entry name" value="IHF-like DNA-binding proteins"/>
    <property type="match status" value="1"/>
</dbReference>
<dbReference type="PROSITE" id="PS00045">
    <property type="entry name" value="HISTONE_LIKE"/>
    <property type="match status" value="1"/>
</dbReference>
<gene>
    <name evidence="1" type="primary">ihfA</name>
    <name evidence="1" type="synonym">himA</name>
    <name type="ordered locus">IL1393</name>
</gene>
<feature type="chain" id="PRO_0000277735" description="Integration host factor subunit alpha">
    <location>
        <begin position="1"/>
        <end position="98"/>
    </location>
</feature>
<evidence type="ECO:0000255" key="1">
    <source>
        <dbReference type="HAMAP-Rule" id="MF_00380"/>
    </source>
</evidence>
<name>IHFA_IDILO</name>
<reference key="1">
    <citation type="journal article" date="2004" name="Proc. Natl. Acad. Sci. U.S.A.">
        <title>Genome sequence of the deep-sea gamma-proteobacterium Idiomarina loihiensis reveals amino acid fermentation as a source of carbon and energy.</title>
        <authorList>
            <person name="Hou S."/>
            <person name="Saw J.H."/>
            <person name="Lee K.S."/>
            <person name="Freitas T.A."/>
            <person name="Belisle C."/>
            <person name="Kawarabayasi Y."/>
            <person name="Donachie S.P."/>
            <person name="Pikina A."/>
            <person name="Galperin M.Y."/>
            <person name="Koonin E.V."/>
            <person name="Makarova K.S."/>
            <person name="Omelchenko M.V."/>
            <person name="Sorokin A."/>
            <person name="Wolf Y.I."/>
            <person name="Li Q.X."/>
            <person name="Keum Y.S."/>
            <person name="Campbell S."/>
            <person name="Denery J."/>
            <person name="Aizawa S."/>
            <person name="Shibata S."/>
            <person name="Malahoff A."/>
            <person name="Alam M."/>
        </authorList>
    </citation>
    <scope>NUCLEOTIDE SEQUENCE [LARGE SCALE GENOMIC DNA]</scope>
    <source>
        <strain>ATCC BAA-735 / DSM 15497 / L2-TR</strain>
    </source>
</reference>
<accession>Q5QXL9</accession>
<organism>
    <name type="scientific">Idiomarina loihiensis (strain ATCC BAA-735 / DSM 15497 / L2-TR)</name>
    <dbReference type="NCBI Taxonomy" id="283942"/>
    <lineage>
        <taxon>Bacteria</taxon>
        <taxon>Pseudomonadati</taxon>
        <taxon>Pseudomonadota</taxon>
        <taxon>Gammaproteobacteria</taxon>
        <taxon>Alteromonadales</taxon>
        <taxon>Idiomarinaceae</taxon>
        <taxon>Idiomarina</taxon>
    </lineage>
</organism>
<protein>
    <recommendedName>
        <fullName evidence="1">Integration host factor subunit alpha</fullName>
        <shortName evidence="1">IHF-alpha</shortName>
    </recommendedName>
</protein>